<gene>
    <name evidence="1" type="primary">mraZ</name>
    <name type="ordered locus">KRH_14910</name>
</gene>
<feature type="chain" id="PRO_1000134805" description="Transcriptional regulator MraZ">
    <location>
        <begin position="1"/>
        <end position="143"/>
    </location>
</feature>
<feature type="domain" description="SpoVT-AbrB 1" evidence="2">
    <location>
        <begin position="5"/>
        <end position="47"/>
    </location>
</feature>
<feature type="domain" description="SpoVT-AbrB 2" evidence="2">
    <location>
        <begin position="76"/>
        <end position="119"/>
    </location>
</feature>
<sequence length="143" mass="16084">MFLGTYEPRLDDKARLILPAKFRAELAEGLVLTRGQERCLYVFSAEEFARVHEQMRSAPLSSKQARDYIRVFLSGASDEVPDKQGRITIPASLRSYAGLDRELAVIGAGSRAEIWDAAAWQQYLQEKEAAFSETEEEVIPGLF</sequence>
<dbReference type="EMBL" id="AP009152">
    <property type="protein sequence ID" value="BAG29838.1"/>
    <property type="molecule type" value="Genomic_DNA"/>
</dbReference>
<dbReference type="RefSeq" id="WP_012398559.1">
    <property type="nucleotide sequence ID" value="NZ_VECX01000009.1"/>
</dbReference>
<dbReference type="SMR" id="B2GJQ7"/>
<dbReference type="STRING" id="378753.KRH_14910"/>
<dbReference type="KEGG" id="krh:KRH_14910"/>
<dbReference type="eggNOG" id="COG2001">
    <property type="taxonomic scope" value="Bacteria"/>
</dbReference>
<dbReference type="HOGENOM" id="CLU_107907_0_3_11"/>
<dbReference type="OrthoDB" id="9807753at2"/>
<dbReference type="Proteomes" id="UP000008838">
    <property type="component" value="Chromosome"/>
</dbReference>
<dbReference type="GO" id="GO:0005737">
    <property type="term" value="C:cytoplasm"/>
    <property type="evidence" value="ECO:0007669"/>
    <property type="project" value="UniProtKB-UniRule"/>
</dbReference>
<dbReference type="GO" id="GO:0009295">
    <property type="term" value="C:nucleoid"/>
    <property type="evidence" value="ECO:0007669"/>
    <property type="project" value="UniProtKB-SubCell"/>
</dbReference>
<dbReference type="GO" id="GO:0003700">
    <property type="term" value="F:DNA-binding transcription factor activity"/>
    <property type="evidence" value="ECO:0007669"/>
    <property type="project" value="UniProtKB-UniRule"/>
</dbReference>
<dbReference type="GO" id="GO:0000976">
    <property type="term" value="F:transcription cis-regulatory region binding"/>
    <property type="evidence" value="ECO:0007669"/>
    <property type="project" value="TreeGrafter"/>
</dbReference>
<dbReference type="GO" id="GO:2000143">
    <property type="term" value="P:negative regulation of DNA-templated transcription initiation"/>
    <property type="evidence" value="ECO:0007669"/>
    <property type="project" value="TreeGrafter"/>
</dbReference>
<dbReference type="CDD" id="cd16321">
    <property type="entry name" value="MraZ_C"/>
    <property type="match status" value="1"/>
</dbReference>
<dbReference type="CDD" id="cd16320">
    <property type="entry name" value="MraZ_N"/>
    <property type="match status" value="1"/>
</dbReference>
<dbReference type="Gene3D" id="3.40.1550.20">
    <property type="entry name" value="Transcriptional regulator MraZ domain"/>
    <property type="match status" value="1"/>
</dbReference>
<dbReference type="HAMAP" id="MF_01008">
    <property type="entry name" value="MraZ"/>
    <property type="match status" value="1"/>
</dbReference>
<dbReference type="InterPro" id="IPR003444">
    <property type="entry name" value="MraZ"/>
</dbReference>
<dbReference type="InterPro" id="IPR035644">
    <property type="entry name" value="MraZ_C"/>
</dbReference>
<dbReference type="InterPro" id="IPR020603">
    <property type="entry name" value="MraZ_dom"/>
</dbReference>
<dbReference type="InterPro" id="IPR035642">
    <property type="entry name" value="MraZ_N"/>
</dbReference>
<dbReference type="InterPro" id="IPR038619">
    <property type="entry name" value="MraZ_sf"/>
</dbReference>
<dbReference type="InterPro" id="IPR007159">
    <property type="entry name" value="SpoVT-AbrB_dom"/>
</dbReference>
<dbReference type="InterPro" id="IPR037914">
    <property type="entry name" value="SpoVT-AbrB_sf"/>
</dbReference>
<dbReference type="NCBIfam" id="TIGR00242">
    <property type="entry name" value="division/cell wall cluster transcriptional repressor MraZ"/>
    <property type="match status" value="1"/>
</dbReference>
<dbReference type="PANTHER" id="PTHR34701">
    <property type="entry name" value="TRANSCRIPTIONAL REGULATOR MRAZ"/>
    <property type="match status" value="1"/>
</dbReference>
<dbReference type="PANTHER" id="PTHR34701:SF1">
    <property type="entry name" value="TRANSCRIPTIONAL REGULATOR MRAZ"/>
    <property type="match status" value="1"/>
</dbReference>
<dbReference type="Pfam" id="PF02381">
    <property type="entry name" value="MraZ"/>
    <property type="match status" value="2"/>
</dbReference>
<dbReference type="SUPFAM" id="SSF89447">
    <property type="entry name" value="AbrB/MazE/MraZ-like"/>
    <property type="match status" value="1"/>
</dbReference>
<dbReference type="PROSITE" id="PS51740">
    <property type="entry name" value="SPOVT_ABRB"/>
    <property type="match status" value="2"/>
</dbReference>
<proteinExistence type="inferred from homology"/>
<organism>
    <name type="scientific">Kocuria rhizophila (strain ATCC 9341 / DSM 348 / NBRC 103217 / DC2201)</name>
    <dbReference type="NCBI Taxonomy" id="378753"/>
    <lineage>
        <taxon>Bacteria</taxon>
        <taxon>Bacillati</taxon>
        <taxon>Actinomycetota</taxon>
        <taxon>Actinomycetes</taxon>
        <taxon>Micrococcales</taxon>
        <taxon>Micrococcaceae</taxon>
        <taxon>Kocuria</taxon>
    </lineage>
</organism>
<evidence type="ECO:0000255" key="1">
    <source>
        <dbReference type="HAMAP-Rule" id="MF_01008"/>
    </source>
</evidence>
<evidence type="ECO:0000255" key="2">
    <source>
        <dbReference type="PROSITE-ProRule" id="PRU01076"/>
    </source>
</evidence>
<accession>B2GJQ7</accession>
<comment type="subunit">
    <text evidence="1">Forms oligomers.</text>
</comment>
<comment type="subcellular location">
    <subcellularLocation>
        <location evidence="1">Cytoplasm</location>
        <location evidence="1">Nucleoid</location>
    </subcellularLocation>
</comment>
<comment type="similarity">
    <text evidence="1">Belongs to the MraZ family.</text>
</comment>
<reference key="1">
    <citation type="journal article" date="2008" name="J. Bacteriol.">
        <title>Complete genome sequence of the soil actinomycete Kocuria rhizophila.</title>
        <authorList>
            <person name="Takarada H."/>
            <person name="Sekine M."/>
            <person name="Kosugi H."/>
            <person name="Matsuo Y."/>
            <person name="Fujisawa T."/>
            <person name="Omata S."/>
            <person name="Kishi E."/>
            <person name="Shimizu A."/>
            <person name="Tsukatani N."/>
            <person name="Tanikawa S."/>
            <person name="Fujita N."/>
            <person name="Harayama S."/>
        </authorList>
    </citation>
    <scope>NUCLEOTIDE SEQUENCE [LARGE SCALE GENOMIC DNA]</scope>
    <source>
        <strain>ATCC 9341 / DSM 348 / NBRC 103217 / DC2201</strain>
    </source>
</reference>
<name>MRAZ_KOCRD</name>
<protein>
    <recommendedName>
        <fullName>Transcriptional regulator MraZ</fullName>
    </recommendedName>
</protein>
<keyword id="KW-0963">Cytoplasm</keyword>
<keyword id="KW-0238">DNA-binding</keyword>
<keyword id="KW-1185">Reference proteome</keyword>
<keyword id="KW-0677">Repeat</keyword>
<keyword id="KW-0804">Transcription</keyword>
<keyword id="KW-0805">Transcription regulation</keyword>